<proteinExistence type="evidence at protein level"/>
<accession>P00981</accession>
<accession>Q91351</accession>
<name>VKTHK_DENPO</name>
<organism>
    <name type="scientific">Dendroaspis polylepis polylepis</name>
    <name type="common">Black mamba</name>
    <dbReference type="NCBI Taxonomy" id="8620"/>
    <lineage>
        <taxon>Eukaryota</taxon>
        <taxon>Metazoa</taxon>
        <taxon>Chordata</taxon>
        <taxon>Craniata</taxon>
        <taxon>Vertebrata</taxon>
        <taxon>Euteleostomi</taxon>
        <taxon>Lepidosauria</taxon>
        <taxon>Squamata</taxon>
        <taxon>Bifurcata</taxon>
        <taxon>Unidentata</taxon>
        <taxon>Episquamata</taxon>
        <taxon>Toxicofera</taxon>
        <taxon>Serpentes</taxon>
        <taxon>Colubroidea</taxon>
        <taxon>Elapidae</taxon>
        <taxon>Elapinae</taxon>
        <taxon>Dendroaspis</taxon>
    </lineage>
</organism>
<dbReference type="EMBL" id="S61886">
    <property type="protein sequence ID" value="AAB26998.1"/>
    <property type="molecule type" value="mRNA"/>
</dbReference>
<dbReference type="PIR" id="A49291">
    <property type="entry name" value="TIEPVK"/>
</dbReference>
<dbReference type="PDB" id="1DTK">
    <property type="method" value="NMR"/>
    <property type="chains" value="A=23-79"/>
</dbReference>
<dbReference type="PDBsum" id="1DTK"/>
<dbReference type="BMRB" id="P00981"/>
<dbReference type="SMR" id="P00981"/>
<dbReference type="MEROPS" id="I02.056"/>
<dbReference type="EvolutionaryTrace" id="P00981"/>
<dbReference type="GO" id="GO:0005615">
    <property type="term" value="C:extracellular space"/>
    <property type="evidence" value="ECO:0007669"/>
    <property type="project" value="TreeGrafter"/>
</dbReference>
<dbReference type="GO" id="GO:0015459">
    <property type="term" value="F:potassium channel regulator activity"/>
    <property type="evidence" value="ECO:0007669"/>
    <property type="project" value="UniProtKB-KW"/>
</dbReference>
<dbReference type="GO" id="GO:0004867">
    <property type="term" value="F:serine-type endopeptidase inhibitor activity"/>
    <property type="evidence" value="ECO:0007669"/>
    <property type="project" value="InterPro"/>
</dbReference>
<dbReference type="GO" id="GO:0090729">
    <property type="term" value="F:toxin activity"/>
    <property type="evidence" value="ECO:0007669"/>
    <property type="project" value="UniProtKB-KW"/>
</dbReference>
<dbReference type="CDD" id="cd22595">
    <property type="entry name" value="Kunitz_dendrotoxin"/>
    <property type="match status" value="1"/>
</dbReference>
<dbReference type="Gene3D" id="4.10.410.10">
    <property type="entry name" value="Pancreatic trypsin inhibitor Kunitz domain"/>
    <property type="match status" value="1"/>
</dbReference>
<dbReference type="InterPro" id="IPR002223">
    <property type="entry name" value="Kunitz_BPTI"/>
</dbReference>
<dbReference type="InterPro" id="IPR036880">
    <property type="entry name" value="Kunitz_BPTI_sf"/>
</dbReference>
<dbReference type="InterPro" id="IPR020901">
    <property type="entry name" value="Prtase_inh_Kunz-CS"/>
</dbReference>
<dbReference type="InterPro" id="IPR050098">
    <property type="entry name" value="TFPI/VKTCI-like"/>
</dbReference>
<dbReference type="PANTHER" id="PTHR10083:SF374">
    <property type="entry name" value="BPTI_KUNITZ INHIBITOR DOMAIN-CONTAINING PROTEIN"/>
    <property type="match status" value="1"/>
</dbReference>
<dbReference type="PANTHER" id="PTHR10083">
    <property type="entry name" value="KUNITZ-TYPE PROTEASE INHIBITOR-RELATED"/>
    <property type="match status" value="1"/>
</dbReference>
<dbReference type="Pfam" id="PF00014">
    <property type="entry name" value="Kunitz_BPTI"/>
    <property type="match status" value="1"/>
</dbReference>
<dbReference type="PRINTS" id="PR00759">
    <property type="entry name" value="BASICPTASE"/>
</dbReference>
<dbReference type="SMART" id="SM00131">
    <property type="entry name" value="KU"/>
    <property type="match status" value="1"/>
</dbReference>
<dbReference type="SUPFAM" id="SSF57362">
    <property type="entry name" value="BPTI-like"/>
    <property type="match status" value="1"/>
</dbReference>
<dbReference type="PROSITE" id="PS00280">
    <property type="entry name" value="BPTI_KUNITZ_1"/>
    <property type="match status" value="1"/>
</dbReference>
<dbReference type="PROSITE" id="PS50279">
    <property type="entry name" value="BPTI_KUNITZ_2"/>
    <property type="match status" value="1"/>
</dbReference>
<protein>
    <recommendedName>
        <fullName>Kunitz-type serine protease inhibitor homolog dendrotoxin K</fullName>
        <shortName>DTX-K</shortName>
    </recommendedName>
    <alternativeName>
        <fullName>Venom basic protease inhibitor K</fullName>
    </alternativeName>
</protein>
<sequence>SGHLLLLLGLLTLWAELTPVSGAAKYCKLPLRIGPCKRKIPSFYYKWKAKQCLPFDYSGCGGNANRFKTIEECRRTCVG</sequence>
<reference key="1">
    <citation type="journal article" date="1993" name="Biochemistry">
        <title>Cloning and functional expression of dendrotoxin K from black mamba, a K+ channel blocker.</title>
        <authorList>
            <person name="Smith L.A."/>
            <person name="Lafaye P.J."/>
            <person name="LaPenotiere H.F."/>
            <person name="Spain T."/>
            <person name="Dolly J.O."/>
        </authorList>
    </citation>
    <scope>NUCLEOTIDE SEQUENCE [MRNA]</scope>
    <scope>PROTEIN SEQUENCE OF 23-39</scope>
    <scope>SUBCELLULAR LOCATION</scope>
</reference>
<reference key="2">
    <citation type="journal article" date="1977" name="Biochim. Biophys. Acta">
        <title>Snake venom toxins. The amino acid sequence of toxin Vi2, a homologue of pancreatic trypsin inhibitor, from Dendroaspis polylepis polylepis (black mamba) venom.</title>
        <authorList>
            <person name="Strydom D.J."/>
        </authorList>
    </citation>
    <scope>PROTEIN SEQUENCE OF 23-79</scope>
    <scope>SUBCELLULAR LOCATION</scope>
    <source>
        <tissue>Venom</tissue>
    </source>
</reference>
<reference key="3">
    <citation type="journal article" date="1996" name="FEBS Lett.">
        <title>Novel effects of dendrotoxin homologues on subtypes of mammalian Kv1 potassium channels expressed in Xenopus oocytes.</title>
        <authorList>
            <person name="Robertson B."/>
            <person name="Owen D."/>
            <person name="Stow J."/>
            <person name="Butler C."/>
            <person name="Newland C."/>
        </authorList>
    </citation>
    <scope>FUNCTION</scope>
</reference>
<reference key="4">
    <citation type="journal article" date="1997" name="Biochemistry">
        <title>Site-directed mutagenesis of dendrotoxin K reveals amino acids critical for its interaction with neuronal K+ channels.</title>
        <authorList>
            <person name="Smith L.A."/>
            <person name="Reid P.F."/>
            <person name="Wang F.C."/>
            <person name="Parcej D.N."/>
            <person name="Schmidt J.J."/>
            <person name="Olson M.A."/>
            <person name="Dolly J.O."/>
        </authorList>
    </citation>
    <scope>MUTAGENESIS OF LYS-25; LYS-28; LYS-46; TRP-47; LYS-48; ALA-49; LYS-50; ARG-74 AND ARG-75</scope>
    <scope>SITES LYS-25; LYS-28; TRP-47 AND LYS-48</scope>
</reference>
<reference key="5">
    <citation type="journal article" date="1997" name="Br. J. Pharmacol.">
        <title>The relative potencies of dendrotoxins as blockers of the cloned voltage-gated K+ channel, mKv1.1 (MK-1), when stably expressed in Chinese hamster ovary cells.</title>
        <authorList>
            <person name="Owen D.G."/>
            <person name="Hall A."/>
            <person name="Stephens G."/>
            <person name="Stow J."/>
            <person name="Robertson B."/>
        </authorList>
    </citation>
    <scope>FUNCTION</scope>
</reference>
<reference key="6">
    <citation type="journal article" date="1999" name="Eur. J. Biochem.">
        <title>Identification of residues in dendrotoxin K responsible for its discrimination between neuronal K+ channels containing Kv1.1 and 1.2 alpha subunits.</title>
        <authorList>
            <person name="Wang F.C."/>
            <person name="Bell N."/>
            <person name="Reid P."/>
            <person name="Smith L.A."/>
            <person name="McIntosh P."/>
            <person name="Robertson B."/>
            <person name="Dolly J.O."/>
        </authorList>
    </citation>
    <scope>FUNCTION</scope>
    <scope>MUTAGENESIS OF PRO-35; LYS-37; ARG-38; LYS-39; TRP-47; LYS-48; ALA-49; LYS-50; ARG-74 AND ARG-75</scope>
</reference>
<reference key="7">
    <citation type="journal article" date="1993" name="J. Mol. Biol.">
        <title>Nuclear magnetic resonance solution structure of dendrotoxin K from the venom of Dendroaspis polylepis polylepis.</title>
        <authorList>
            <person name="Berndt K.D."/>
            <person name="Guentert P."/>
            <person name="Wuethrich K."/>
        </authorList>
    </citation>
    <scope>STRUCTURE BY NMR OF 23-79</scope>
    <scope>DISULFIDE BONDS</scope>
</reference>
<evidence type="ECO:0000255" key="1">
    <source>
        <dbReference type="PROSITE-ProRule" id="PRU00031"/>
    </source>
</evidence>
<evidence type="ECO:0000269" key="2">
    <source>
    </source>
</evidence>
<evidence type="ECO:0000269" key="3">
    <source>
    </source>
</evidence>
<evidence type="ECO:0000269" key="4">
    <source>
    </source>
</evidence>
<evidence type="ECO:0000269" key="5">
    <source>
    </source>
</evidence>
<evidence type="ECO:0000269" key="6">
    <source>
    </source>
</evidence>
<evidence type="ECO:0000269" key="7">
    <source>
    </source>
</evidence>
<evidence type="ECO:0000269" key="8">
    <source>
    </source>
</evidence>
<evidence type="ECO:0000305" key="9"/>
<evidence type="ECO:0000305" key="10">
    <source>
    </source>
</evidence>
<evidence type="ECO:0000305" key="11">
    <source>
    </source>
</evidence>
<evidence type="ECO:0000305" key="12">
    <source>
    </source>
</evidence>
<evidence type="ECO:0007744" key="13">
    <source>
        <dbReference type="PDB" id="1DTK"/>
    </source>
</evidence>
<evidence type="ECO:0007829" key="14">
    <source>
        <dbReference type="PDB" id="1DTK"/>
    </source>
</evidence>
<feature type="signal peptide">
    <location>
        <begin position="1" status="less than"/>
        <end status="unknown"/>
    </location>
</feature>
<feature type="propeptide" id="PRO_0000016869" evidence="4 5">
    <location>
        <begin status="unknown"/>
        <end position="22"/>
    </location>
</feature>
<feature type="chain" id="PRO_0000016870" description="Kunitz-type serine protease inhibitor homolog dendrotoxin K">
    <location>
        <begin position="23"/>
        <end position="79"/>
    </location>
</feature>
<feature type="domain" description="BPTI/Kunitz inhibitor" evidence="1">
    <location>
        <begin position="27"/>
        <end position="77"/>
    </location>
</feature>
<feature type="site" description="Important for binding to potassium channels">
    <location>
        <position position="25"/>
    </location>
</feature>
<feature type="site" description="Important for binding to potassium channels">
    <location>
        <position position="28"/>
    </location>
</feature>
<feature type="site" description="Important for binding to potassium channels">
    <location>
        <position position="47"/>
    </location>
</feature>
<feature type="site" description="Important for binding to potassium channels">
    <location>
        <position position="48"/>
    </location>
</feature>
<feature type="disulfide bond" evidence="3 13">
    <location>
        <begin position="27"/>
        <end position="77"/>
    </location>
</feature>
<feature type="disulfide bond" evidence="3 13">
    <location>
        <begin position="36"/>
        <end position="60"/>
    </location>
</feature>
<feature type="disulfide bond" evidence="3 13">
    <location>
        <begin position="52"/>
        <end position="73"/>
    </location>
</feature>
<feature type="mutagenesis site" description="Important decrease in binding affinity for Kv." evidence="8">
    <original>K</original>
    <variation>A</variation>
    <location>
        <position position="25"/>
    </location>
</feature>
<feature type="mutagenesis site" description="Decrease in binding affinity for Kv." evidence="8">
    <original>K</original>
    <variation>A</variation>
    <location>
        <position position="28"/>
    </location>
</feature>
<feature type="mutagenesis site" description="Important decrease in binding affinity for Kv; when associated with A-48 and A-50." evidence="2">
    <original>P</original>
    <variation>Q</variation>
    <location>
        <position position="35"/>
    </location>
</feature>
<feature type="mutagenesis site" description="Slight decrease in binding affinity for Kv." evidence="2">
    <original>K</original>
    <variation>Y</variation>
    <location>
        <position position="37"/>
    </location>
</feature>
<feature type="mutagenesis site" description="Slight decrease in binding affinity for Kv." evidence="2">
    <original>R</original>
    <variation>A</variation>
    <location>
        <position position="38"/>
    </location>
</feature>
<feature type="mutagenesis site" description="Slight decrease in binding affinity for Kv. Important decrease in binding affinity for Kv; when associated with A-48." evidence="2">
    <original>K</original>
    <variation>A</variation>
    <location>
        <position position="39"/>
    </location>
</feature>
<feature type="mutagenesis site" description="Slight decrease in binding affinity for Kv." evidence="8">
    <original>K</original>
    <variation>A</variation>
    <location>
        <position position="46"/>
    </location>
</feature>
<feature type="mutagenesis site" description="Decrease in binding affinity for Kv." evidence="2 8">
    <original>W</original>
    <variation>A</variation>
    <location>
        <position position="47"/>
    </location>
</feature>
<feature type="mutagenesis site" description="Decrease in binding affinity for Kv; when associated with K-49." evidence="2 8">
    <original>W</original>
    <variation>Q</variation>
    <location>
        <position position="47"/>
    </location>
</feature>
<feature type="mutagenesis site" description="Important decrease in binding affinity for Kv. Important decrease in binding affinity for Kv; when associated with Q-35 and A-50. Important decrease in binding affinity for Kv; when associated with A-39." evidence="2 8">
    <original>K</original>
    <variation>A</variation>
    <location>
        <position position="48"/>
    </location>
</feature>
<feature type="mutagenesis site" description="Decrease in binding affinity for Kv; when associated with Q-47." evidence="2 8">
    <original>A</original>
    <variation>K</variation>
    <location>
        <position position="49"/>
    </location>
</feature>
<feature type="mutagenesis site" description="Slight increase in binding affinity for Kv." evidence="2 8">
    <original>A</original>
    <variation>K</variation>
    <location>
        <position position="49"/>
    </location>
</feature>
<feature type="mutagenesis site" description="Slight decrease in binding affinity for Kv. Important decrease in binding affinity for Kv; when associated with Q-35 and A-48." evidence="2 8">
    <original>K</original>
    <variation>A</variation>
    <location>
        <position position="50"/>
    </location>
</feature>
<feature type="mutagenesis site" description="No change in binding affinity for Kv." evidence="2 8">
    <original>R</original>
    <variation>A</variation>
    <location>
        <position position="74"/>
    </location>
</feature>
<feature type="mutagenesis site" description="Slight decrease in binding affinity for Kv." evidence="2 8">
    <original>R</original>
    <variation>A</variation>
    <location>
        <position position="74"/>
    </location>
</feature>
<feature type="mutagenesis site" description="No change in binding affinity for Kv." evidence="2 8">
    <original>R</original>
    <variation>A</variation>
    <location>
        <position position="75"/>
    </location>
</feature>
<feature type="mutagenesis site" description="Slight decrease in binding affinity for Kv." evidence="2 8">
    <original>R</original>
    <variation>A</variation>
    <location>
        <position position="75"/>
    </location>
</feature>
<feature type="non-terminal residue">
    <location>
        <position position="1"/>
    </location>
</feature>
<feature type="helix" evidence="14">
    <location>
        <begin position="25"/>
        <end position="28"/>
    </location>
</feature>
<feature type="strand" evidence="14">
    <location>
        <begin position="35"/>
        <end position="37"/>
    </location>
</feature>
<feature type="strand" evidence="14">
    <location>
        <begin position="40"/>
        <end position="45"/>
    </location>
</feature>
<feature type="turn" evidence="14">
    <location>
        <begin position="47"/>
        <end position="49"/>
    </location>
</feature>
<feature type="strand" evidence="14">
    <location>
        <begin position="50"/>
        <end position="57"/>
    </location>
</feature>
<feature type="strand" evidence="14">
    <location>
        <begin position="59"/>
        <end position="61"/>
    </location>
</feature>
<feature type="strand" evidence="14">
    <location>
        <begin position="67"/>
        <end position="69"/>
    </location>
</feature>
<feature type="helix" evidence="14">
    <location>
        <begin position="70"/>
        <end position="77"/>
    </location>
</feature>
<keyword id="KW-0002">3D-structure</keyword>
<keyword id="KW-0903">Direct protein sequencing</keyword>
<keyword id="KW-1015">Disulfide bond</keyword>
<keyword id="KW-0872">Ion channel impairing toxin</keyword>
<keyword id="KW-0528">Neurotoxin</keyword>
<keyword id="KW-0632">Potassium channel impairing toxin</keyword>
<keyword id="KW-0964">Secreted</keyword>
<keyword id="KW-0732">Signal</keyword>
<keyword id="KW-0800">Toxin</keyword>
<keyword id="KW-1220">Voltage-gated potassium channel impairing toxin</keyword>
<comment type="function">
    <text evidence="2 6 7">Serine protease inhibitor homolog that selectively blocks voltage-gated potassium channels homooligomer Kv1.1/KCNA1 (EC(50)=0.6 nM) and Kv1.1-containing heterooligomer.</text>
</comment>
<comment type="subcellular location">
    <subcellularLocation>
        <location evidence="4 5">Secreted</location>
    </subcellularLocation>
</comment>
<comment type="tissue specificity">
    <text evidence="10 11">Expressed by the venom gland.</text>
</comment>
<comment type="toxic dose">
    <text>LD(50) is 30 mg/kg by intravenous injection.</text>
</comment>
<comment type="miscellaneous">
    <text evidence="12">Negative results: does not inhibit serine proteases and voltage-gated potassium channels Kv1.2/KCNA2 and Kv1.6/KCNA6.</text>
</comment>
<comment type="similarity">
    <text evidence="9">Belongs to the venom Kunitz-type family.</text>
</comment>